<accession>A3P092</accession>
<feature type="chain" id="PRO_0000338784" description="Translation initiation factor IF-1 2">
    <location>
        <begin position="1"/>
        <end position="72"/>
    </location>
</feature>
<feature type="domain" description="S1-like" evidence="1">
    <location>
        <begin position="1"/>
        <end position="72"/>
    </location>
</feature>
<comment type="function">
    <text evidence="1">One of the essential components for the initiation of protein synthesis. Stabilizes the binding of IF-2 and IF-3 on the 30S subunit to which N-formylmethionyl-tRNA(fMet) subsequently binds. Helps modulate mRNA selection, yielding the 30S pre-initiation complex (PIC). Upon addition of the 50S ribosomal subunit IF-1, IF-2 and IF-3 are released leaving the mature 70S translation initiation complex.</text>
</comment>
<comment type="subunit">
    <text evidence="1">Component of the 30S ribosomal translation pre-initiation complex which assembles on the 30S ribosome in the order IF-2 and IF-3, IF-1 and N-formylmethionyl-tRNA(fMet); mRNA recruitment can occur at any time during PIC assembly.</text>
</comment>
<comment type="subcellular location">
    <subcellularLocation>
        <location evidence="1">Cytoplasm</location>
    </subcellularLocation>
</comment>
<comment type="similarity">
    <text evidence="1">Belongs to the IF-1 family.</text>
</comment>
<dbReference type="EMBL" id="CP000572">
    <property type="protein sequence ID" value="ABN92072.1"/>
    <property type="molecule type" value="Genomic_DNA"/>
</dbReference>
<dbReference type="SMR" id="A3P092"/>
<dbReference type="KEGG" id="bpl:BURPS1106A_3783"/>
<dbReference type="HOGENOM" id="CLU_151267_1_0_4"/>
<dbReference type="Proteomes" id="UP000006738">
    <property type="component" value="Chromosome I"/>
</dbReference>
<dbReference type="GO" id="GO:0005829">
    <property type="term" value="C:cytosol"/>
    <property type="evidence" value="ECO:0007669"/>
    <property type="project" value="TreeGrafter"/>
</dbReference>
<dbReference type="GO" id="GO:0043022">
    <property type="term" value="F:ribosome binding"/>
    <property type="evidence" value="ECO:0007669"/>
    <property type="project" value="UniProtKB-UniRule"/>
</dbReference>
<dbReference type="GO" id="GO:0019843">
    <property type="term" value="F:rRNA binding"/>
    <property type="evidence" value="ECO:0007669"/>
    <property type="project" value="UniProtKB-UniRule"/>
</dbReference>
<dbReference type="GO" id="GO:0003743">
    <property type="term" value="F:translation initiation factor activity"/>
    <property type="evidence" value="ECO:0007669"/>
    <property type="project" value="UniProtKB-UniRule"/>
</dbReference>
<dbReference type="CDD" id="cd04451">
    <property type="entry name" value="S1_IF1"/>
    <property type="match status" value="1"/>
</dbReference>
<dbReference type="FunFam" id="2.40.50.140:FF:000002">
    <property type="entry name" value="Translation initiation factor IF-1"/>
    <property type="match status" value="1"/>
</dbReference>
<dbReference type="Gene3D" id="2.40.50.140">
    <property type="entry name" value="Nucleic acid-binding proteins"/>
    <property type="match status" value="1"/>
</dbReference>
<dbReference type="HAMAP" id="MF_00075">
    <property type="entry name" value="IF_1"/>
    <property type="match status" value="1"/>
</dbReference>
<dbReference type="InterPro" id="IPR012340">
    <property type="entry name" value="NA-bd_OB-fold"/>
</dbReference>
<dbReference type="InterPro" id="IPR006196">
    <property type="entry name" value="RNA-binding_domain_S1_IF1"/>
</dbReference>
<dbReference type="InterPro" id="IPR003029">
    <property type="entry name" value="S1_domain"/>
</dbReference>
<dbReference type="InterPro" id="IPR004368">
    <property type="entry name" value="TIF_IF1"/>
</dbReference>
<dbReference type="NCBIfam" id="TIGR00008">
    <property type="entry name" value="infA"/>
    <property type="match status" value="1"/>
</dbReference>
<dbReference type="PANTHER" id="PTHR33370">
    <property type="entry name" value="TRANSLATION INITIATION FACTOR IF-1, CHLOROPLASTIC"/>
    <property type="match status" value="1"/>
</dbReference>
<dbReference type="PANTHER" id="PTHR33370:SF1">
    <property type="entry name" value="TRANSLATION INITIATION FACTOR IF-1, CHLOROPLASTIC"/>
    <property type="match status" value="1"/>
</dbReference>
<dbReference type="Pfam" id="PF01176">
    <property type="entry name" value="eIF-1a"/>
    <property type="match status" value="1"/>
</dbReference>
<dbReference type="SMART" id="SM00316">
    <property type="entry name" value="S1"/>
    <property type="match status" value="1"/>
</dbReference>
<dbReference type="SUPFAM" id="SSF50249">
    <property type="entry name" value="Nucleic acid-binding proteins"/>
    <property type="match status" value="1"/>
</dbReference>
<dbReference type="PROSITE" id="PS50832">
    <property type="entry name" value="S1_IF1_TYPE"/>
    <property type="match status" value="1"/>
</dbReference>
<organism>
    <name type="scientific">Burkholderia pseudomallei (strain 1106a)</name>
    <dbReference type="NCBI Taxonomy" id="357348"/>
    <lineage>
        <taxon>Bacteria</taxon>
        <taxon>Pseudomonadati</taxon>
        <taxon>Pseudomonadota</taxon>
        <taxon>Betaproteobacteria</taxon>
        <taxon>Burkholderiales</taxon>
        <taxon>Burkholderiaceae</taxon>
        <taxon>Burkholderia</taxon>
        <taxon>pseudomallei group</taxon>
    </lineage>
</organism>
<gene>
    <name evidence="1" type="primary">infA2</name>
    <name type="ordered locus">BURPS1106A_3783</name>
</gene>
<proteinExistence type="inferred from homology"/>
<protein>
    <recommendedName>
        <fullName evidence="1">Translation initiation factor IF-1 2</fullName>
    </recommendedName>
</protein>
<evidence type="ECO:0000255" key="1">
    <source>
        <dbReference type="HAMAP-Rule" id="MF_00075"/>
    </source>
</evidence>
<reference key="1">
    <citation type="journal article" date="2010" name="Genome Biol. Evol.">
        <title>Continuing evolution of Burkholderia mallei through genome reduction and large-scale rearrangements.</title>
        <authorList>
            <person name="Losada L."/>
            <person name="Ronning C.M."/>
            <person name="DeShazer D."/>
            <person name="Woods D."/>
            <person name="Fedorova N."/>
            <person name="Kim H.S."/>
            <person name="Shabalina S.A."/>
            <person name="Pearson T.R."/>
            <person name="Brinkac L."/>
            <person name="Tan P."/>
            <person name="Nandi T."/>
            <person name="Crabtree J."/>
            <person name="Badger J."/>
            <person name="Beckstrom-Sternberg S."/>
            <person name="Saqib M."/>
            <person name="Schutzer S.E."/>
            <person name="Keim P."/>
            <person name="Nierman W.C."/>
        </authorList>
    </citation>
    <scope>NUCLEOTIDE SEQUENCE [LARGE SCALE GENOMIC DNA]</scope>
    <source>
        <strain>1106a</strain>
    </source>
</reference>
<sequence length="72" mass="8218">MAKDDVIQMQGEVIENLPNATFRVKLENGHVVLGHISGKMRMHYIRILPGDKVTVELTPYDLSRARIVFRAK</sequence>
<name>IF12_BURP0</name>
<keyword id="KW-0963">Cytoplasm</keyword>
<keyword id="KW-0396">Initiation factor</keyword>
<keyword id="KW-0648">Protein biosynthesis</keyword>
<keyword id="KW-0694">RNA-binding</keyword>
<keyword id="KW-0699">rRNA-binding</keyword>